<sequence>MELVVGRVVKSHGVTGEVVVEIRTDDPADRFAPGTRLRAKGPFDGGAEGSAVSYVIESVRQHGGRLLVRLAGVADRDAADALRGSLFVIDADDLPPIDEPDTYYDHQLVGLMVQTATGEGVGVVTEVVHTAAGELLAVKRDSDEVLVPFVRAIVTSVSLDDGIVEIDPPHGLLNLE</sequence>
<feature type="chain" id="PRO_0000163320" description="Ribosome maturation factor RimM">
    <location>
        <begin position="1"/>
        <end position="176"/>
    </location>
</feature>
<feature type="domain" description="PRC barrel" evidence="1">
    <location>
        <begin position="100"/>
        <end position="172"/>
    </location>
</feature>
<feature type="helix" evidence="2">
    <location>
        <begin position="105"/>
        <end position="108"/>
    </location>
</feature>
<feature type="strand" evidence="2">
    <location>
        <begin position="111"/>
        <end position="115"/>
    </location>
</feature>
<feature type="strand" evidence="2">
    <location>
        <begin position="122"/>
        <end position="126"/>
    </location>
</feature>
<feature type="strand" evidence="2">
    <location>
        <begin position="131"/>
        <end position="139"/>
    </location>
</feature>
<feature type="strand" evidence="2">
    <location>
        <begin position="141"/>
        <end position="149"/>
    </location>
</feature>
<feature type="turn" evidence="2">
    <location>
        <begin position="151"/>
        <end position="153"/>
    </location>
</feature>
<feature type="strand" evidence="2">
    <location>
        <begin position="156"/>
        <end position="158"/>
    </location>
</feature>
<feature type="turn" evidence="2">
    <location>
        <begin position="159"/>
        <end position="162"/>
    </location>
</feature>
<feature type="strand" evidence="2">
    <location>
        <begin position="163"/>
        <end position="166"/>
    </location>
</feature>
<feature type="turn" evidence="2">
    <location>
        <begin position="170"/>
        <end position="173"/>
    </location>
</feature>
<proteinExistence type="evidence at protein level"/>
<keyword id="KW-0002">3D-structure</keyword>
<keyword id="KW-0143">Chaperone</keyword>
<keyword id="KW-0963">Cytoplasm</keyword>
<keyword id="KW-1185">Reference proteome</keyword>
<keyword id="KW-0690">Ribosome biogenesis</keyword>
<keyword id="KW-0698">rRNA processing</keyword>
<organism>
    <name type="scientific">Mycobacterium tuberculosis (strain ATCC 25618 / H37Rv)</name>
    <dbReference type="NCBI Taxonomy" id="83332"/>
    <lineage>
        <taxon>Bacteria</taxon>
        <taxon>Bacillati</taxon>
        <taxon>Actinomycetota</taxon>
        <taxon>Actinomycetes</taxon>
        <taxon>Mycobacteriales</taxon>
        <taxon>Mycobacteriaceae</taxon>
        <taxon>Mycobacterium</taxon>
        <taxon>Mycobacterium tuberculosis complex</taxon>
    </lineage>
</organism>
<gene>
    <name evidence="1" type="primary">rimM</name>
    <name type="ordered locus">Rv2907c</name>
    <name type="ORF">MTCY274.38c</name>
</gene>
<protein>
    <recommendedName>
        <fullName evidence="1">Ribosome maturation factor RimM</fullName>
    </recommendedName>
</protein>
<accession>P9WH19</accession>
<accession>L0TCL1</accession>
<accession>P66653</accession>
<accession>Q10824</accession>
<reference key="1">
    <citation type="journal article" date="1998" name="Nature">
        <title>Deciphering the biology of Mycobacterium tuberculosis from the complete genome sequence.</title>
        <authorList>
            <person name="Cole S.T."/>
            <person name="Brosch R."/>
            <person name="Parkhill J."/>
            <person name="Garnier T."/>
            <person name="Churcher C.M."/>
            <person name="Harris D.E."/>
            <person name="Gordon S.V."/>
            <person name="Eiglmeier K."/>
            <person name="Gas S."/>
            <person name="Barry C.E. III"/>
            <person name="Tekaia F."/>
            <person name="Badcock K."/>
            <person name="Basham D."/>
            <person name="Brown D."/>
            <person name="Chillingworth T."/>
            <person name="Connor R."/>
            <person name="Davies R.M."/>
            <person name="Devlin K."/>
            <person name="Feltwell T."/>
            <person name="Gentles S."/>
            <person name="Hamlin N."/>
            <person name="Holroyd S."/>
            <person name="Hornsby T."/>
            <person name="Jagels K."/>
            <person name="Krogh A."/>
            <person name="McLean J."/>
            <person name="Moule S."/>
            <person name="Murphy L.D."/>
            <person name="Oliver S."/>
            <person name="Osborne J."/>
            <person name="Quail M.A."/>
            <person name="Rajandream M.A."/>
            <person name="Rogers J."/>
            <person name="Rutter S."/>
            <person name="Seeger K."/>
            <person name="Skelton S."/>
            <person name="Squares S."/>
            <person name="Squares R."/>
            <person name="Sulston J.E."/>
            <person name="Taylor K."/>
            <person name="Whitehead S."/>
            <person name="Barrell B.G."/>
        </authorList>
    </citation>
    <scope>NUCLEOTIDE SEQUENCE [LARGE SCALE GENOMIC DNA]</scope>
    <source>
        <strain>ATCC 25618 / H37Rv</strain>
    </source>
</reference>
<reference key="2">
    <citation type="journal article" date="2011" name="Mol. Cell. Proteomics">
        <title>Proteogenomic analysis of Mycobacterium tuberculosis by high resolution mass spectrometry.</title>
        <authorList>
            <person name="Kelkar D.S."/>
            <person name="Kumar D."/>
            <person name="Kumar P."/>
            <person name="Balakrishnan L."/>
            <person name="Muthusamy B."/>
            <person name="Yadav A.K."/>
            <person name="Shrivastava P."/>
            <person name="Marimuthu A."/>
            <person name="Anand S."/>
            <person name="Sundaram H."/>
            <person name="Kingsbury R."/>
            <person name="Harsha H.C."/>
            <person name="Nair B."/>
            <person name="Prasad T.S."/>
            <person name="Chauhan D.S."/>
            <person name="Katoch K."/>
            <person name="Katoch V.M."/>
            <person name="Kumar P."/>
            <person name="Chaerkady R."/>
            <person name="Ramachandran S."/>
            <person name="Dash D."/>
            <person name="Pandey A."/>
        </authorList>
    </citation>
    <scope>IDENTIFICATION BY MASS SPECTROMETRY [LARGE SCALE ANALYSIS]</scope>
    <source>
        <strain>ATCC 25618 / H37Rv</strain>
    </source>
</reference>
<dbReference type="EMBL" id="AL123456">
    <property type="protein sequence ID" value="CCP45709.1"/>
    <property type="molecule type" value="Genomic_DNA"/>
</dbReference>
<dbReference type="PIR" id="F70927">
    <property type="entry name" value="F70927"/>
</dbReference>
<dbReference type="RefSeq" id="NP_217423.1">
    <property type="nucleotide sequence ID" value="NC_000962.3"/>
</dbReference>
<dbReference type="RefSeq" id="WP_003414726.1">
    <property type="nucleotide sequence ID" value="NZ_NVQJ01000006.1"/>
</dbReference>
<dbReference type="PDB" id="7CQ1">
    <property type="method" value="NMR"/>
    <property type="chains" value="A=101-176"/>
</dbReference>
<dbReference type="PDBsum" id="7CQ1"/>
<dbReference type="SMR" id="P9WH19"/>
<dbReference type="FunCoup" id="P9WH19">
    <property type="interactions" value="119"/>
</dbReference>
<dbReference type="STRING" id="83332.Rv2907c"/>
<dbReference type="PaxDb" id="83332-Rv2907c"/>
<dbReference type="DNASU" id="887188"/>
<dbReference type="GeneID" id="45426894"/>
<dbReference type="GeneID" id="887188"/>
<dbReference type="KEGG" id="mtu:Rv2907c"/>
<dbReference type="KEGG" id="mtv:RVBD_2907c"/>
<dbReference type="TubercuList" id="Rv2907c"/>
<dbReference type="eggNOG" id="COG0806">
    <property type="taxonomic scope" value="Bacteria"/>
</dbReference>
<dbReference type="InParanoid" id="P9WH19"/>
<dbReference type="OrthoDB" id="5381335at2"/>
<dbReference type="PhylomeDB" id="P9WH19"/>
<dbReference type="Proteomes" id="UP000001584">
    <property type="component" value="Chromosome"/>
</dbReference>
<dbReference type="GO" id="GO:0005829">
    <property type="term" value="C:cytosol"/>
    <property type="evidence" value="ECO:0000318"/>
    <property type="project" value="GO_Central"/>
</dbReference>
<dbReference type="GO" id="GO:0005840">
    <property type="term" value="C:ribosome"/>
    <property type="evidence" value="ECO:0007669"/>
    <property type="project" value="InterPro"/>
</dbReference>
<dbReference type="GO" id="GO:0043022">
    <property type="term" value="F:ribosome binding"/>
    <property type="evidence" value="ECO:0007669"/>
    <property type="project" value="InterPro"/>
</dbReference>
<dbReference type="GO" id="GO:0030490">
    <property type="term" value="P:maturation of SSU-rRNA"/>
    <property type="evidence" value="ECO:0000318"/>
    <property type="project" value="GO_Central"/>
</dbReference>
<dbReference type="Gene3D" id="2.30.30.240">
    <property type="entry name" value="PRC-barrel domain"/>
    <property type="match status" value="1"/>
</dbReference>
<dbReference type="Gene3D" id="2.40.30.60">
    <property type="entry name" value="RimM"/>
    <property type="match status" value="1"/>
</dbReference>
<dbReference type="HAMAP" id="MF_00014">
    <property type="entry name" value="Ribosome_mat_RimM"/>
    <property type="match status" value="1"/>
</dbReference>
<dbReference type="InterPro" id="IPR011033">
    <property type="entry name" value="PRC_barrel-like_sf"/>
</dbReference>
<dbReference type="InterPro" id="IPR056792">
    <property type="entry name" value="PRC_RimM"/>
</dbReference>
<dbReference type="InterPro" id="IPR011961">
    <property type="entry name" value="RimM"/>
</dbReference>
<dbReference type="InterPro" id="IPR002676">
    <property type="entry name" value="RimM_N"/>
</dbReference>
<dbReference type="InterPro" id="IPR036976">
    <property type="entry name" value="RimM_N_sf"/>
</dbReference>
<dbReference type="InterPro" id="IPR009000">
    <property type="entry name" value="Transl_B-barrel_sf"/>
</dbReference>
<dbReference type="NCBIfam" id="TIGR02273">
    <property type="entry name" value="16S_RimM"/>
    <property type="match status" value="1"/>
</dbReference>
<dbReference type="PANTHER" id="PTHR33692">
    <property type="entry name" value="RIBOSOME MATURATION FACTOR RIMM"/>
    <property type="match status" value="1"/>
</dbReference>
<dbReference type="PANTHER" id="PTHR33692:SF1">
    <property type="entry name" value="RIBOSOME MATURATION FACTOR RIMM"/>
    <property type="match status" value="1"/>
</dbReference>
<dbReference type="Pfam" id="PF24986">
    <property type="entry name" value="PRC_RimM"/>
    <property type="match status" value="1"/>
</dbReference>
<dbReference type="Pfam" id="PF01782">
    <property type="entry name" value="RimM"/>
    <property type="match status" value="1"/>
</dbReference>
<dbReference type="SUPFAM" id="SSF50346">
    <property type="entry name" value="PRC-barrel domain"/>
    <property type="match status" value="1"/>
</dbReference>
<dbReference type="SUPFAM" id="SSF50447">
    <property type="entry name" value="Translation proteins"/>
    <property type="match status" value="1"/>
</dbReference>
<name>RIMM_MYCTU</name>
<comment type="function">
    <text evidence="1">An accessory protein needed during the final step in the assembly of 30S ribosomal subunit, possibly for assembly of the head region. Essential for efficient processing of 16S rRNA. May be needed both before and after RbfA during the maturation of 16S rRNA. It has affinity for free ribosomal 30S subunits but not for 70S ribosomes.</text>
</comment>
<comment type="subunit">
    <text evidence="1">Binds ribosomal protein uS19.</text>
</comment>
<comment type="subcellular location">
    <subcellularLocation>
        <location evidence="1">Cytoplasm</location>
    </subcellularLocation>
</comment>
<comment type="domain">
    <text evidence="1">The PRC barrel domain binds ribosomal protein uS19.</text>
</comment>
<comment type="similarity">
    <text evidence="1">Belongs to the RimM family.</text>
</comment>
<evidence type="ECO:0000255" key="1">
    <source>
        <dbReference type="HAMAP-Rule" id="MF_00014"/>
    </source>
</evidence>
<evidence type="ECO:0007829" key="2">
    <source>
        <dbReference type="PDB" id="7CQ1"/>
    </source>
</evidence>